<keyword id="KW-0153">Cholesterol metabolism</keyword>
<keyword id="KW-0325">Glycoprotein</keyword>
<keyword id="KW-0345">HDL</keyword>
<keyword id="KW-0443">Lipid metabolism</keyword>
<keyword id="KW-0445">Lipid transport</keyword>
<keyword id="KW-0449">Lipoprotein</keyword>
<keyword id="KW-0558">Oxidation</keyword>
<keyword id="KW-0564">Palmitate</keyword>
<keyword id="KW-0597">Phosphoprotein</keyword>
<keyword id="KW-0677">Repeat</keyword>
<keyword id="KW-0964">Secreted</keyword>
<keyword id="KW-0732">Signal</keyword>
<keyword id="KW-0753">Steroid metabolism</keyword>
<keyword id="KW-1207">Sterol metabolism</keyword>
<keyword id="KW-0813">Transport</keyword>
<comment type="function">
    <text evidence="1">Participates in the reverse transport of cholesterol from tissues to the liver for excretion by promoting cholesterol efflux from tissues and by acting as a cofactor for the lecithin cholesterol acyltransferase (LCAT). As part of the SPAP complex, activates spermatozoa motility (By similarity).</text>
</comment>
<comment type="subunit">
    <text evidence="2 3 4">Homodimer (By similarity). Interacts with APOA1BP and CLU. Component of a sperm activating protein complex (SPAP), consisting of APOA1, an immunoglobulin heavy chain, an immunoglobulin light chain and albumin. Interacts with NDRG1. Interacts with SCGB3A2 (By similarity). Interacts with NAXE and YJEFN3 (By similarity).</text>
</comment>
<comment type="subcellular location">
    <subcellularLocation>
        <location>Secreted</location>
    </subcellularLocation>
</comment>
<comment type="tissue specificity">
    <text>Major protein of plasma HDL, also found in chylomicrons.</text>
</comment>
<comment type="PTM">
    <text evidence="1">Glycosylated.</text>
</comment>
<comment type="PTM">
    <text evidence="1">Palmitoylated.</text>
</comment>
<comment type="PTM">
    <text evidence="1">Phosphorylation sites are present in the extracellular medium.</text>
</comment>
<comment type="similarity">
    <text evidence="5">Belongs to the apolipoprotein A1/A4/E family.</text>
</comment>
<organism>
    <name type="scientific">Orycteropus afer</name>
    <name type="common">Aardvark</name>
    <dbReference type="NCBI Taxonomy" id="9818"/>
    <lineage>
        <taxon>Eukaryota</taxon>
        <taxon>Metazoa</taxon>
        <taxon>Chordata</taxon>
        <taxon>Craniata</taxon>
        <taxon>Vertebrata</taxon>
        <taxon>Euteleostomi</taxon>
        <taxon>Mammalia</taxon>
        <taxon>Eutheria</taxon>
        <taxon>Afrotheria</taxon>
        <taxon>Tubulidentata</taxon>
        <taxon>Orycteropodidae</taxon>
        <taxon>Orycteropus</taxon>
    </lineage>
</organism>
<gene>
    <name type="primary">APOA1</name>
</gene>
<geneLocation type="mitochondrion"/>
<name>APOA1_ORYAF</name>
<proteinExistence type="evidence at transcript level"/>
<evidence type="ECO:0000250" key="1"/>
<evidence type="ECO:0000250" key="2">
    <source>
        <dbReference type="UniProtKB" id="G5BQH5"/>
    </source>
</evidence>
<evidence type="ECO:0000250" key="3">
    <source>
        <dbReference type="UniProtKB" id="P02647"/>
    </source>
</evidence>
<evidence type="ECO:0000250" key="4">
    <source>
        <dbReference type="UniProtKB" id="P04639"/>
    </source>
</evidence>
<evidence type="ECO:0000305" key="5"/>
<feature type="signal peptide" evidence="1">
    <location>
        <begin position="1"/>
        <end position="20"/>
    </location>
</feature>
<feature type="chain" id="PRO_0000425327" description="Proapolipoprotein A-I">
    <location>
        <begin position="21"/>
        <end position="265"/>
    </location>
</feature>
<feature type="chain" id="PRO_0000425259" description="Apolipoprotein A-I">
    <location>
        <begin position="27"/>
        <end position="265"/>
    </location>
</feature>
<feature type="chain" id="PRO_0000425260" description="Truncated apolipoprotein A-I">
    <location>
        <begin position="27"/>
        <end position="264"/>
    </location>
</feature>
<feature type="repeat" description="1">
    <location>
        <begin position="69"/>
        <end position="90"/>
    </location>
</feature>
<feature type="repeat" description="2">
    <location>
        <begin position="91"/>
        <end position="112"/>
    </location>
</feature>
<feature type="repeat" description="3; half-length">
    <location>
        <begin position="113"/>
        <end position="123"/>
    </location>
</feature>
<feature type="repeat" description="4">
    <location>
        <begin position="124"/>
        <end position="145"/>
    </location>
</feature>
<feature type="repeat" description="5">
    <location>
        <begin position="146"/>
        <end position="167"/>
    </location>
</feature>
<feature type="repeat" description="6">
    <location>
        <begin position="168"/>
        <end position="189"/>
    </location>
</feature>
<feature type="repeat" description="7">
    <location>
        <begin position="190"/>
        <end position="209"/>
    </location>
</feature>
<feature type="repeat" description="8">
    <location>
        <begin position="210"/>
        <end position="230"/>
    </location>
</feature>
<feature type="repeat" description="9; half-length">
    <location>
        <begin position="231"/>
        <end position="241"/>
    </location>
</feature>
<feature type="repeat" description="10">
    <location>
        <begin position="242"/>
        <end position="265"/>
    </location>
</feature>
<feature type="region of interest" description="10 X approximate tandem repeats" evidence="1">
    <location>
        <begin position="69"/>
        <end position="265"/>
    </location>
</feature>
<feature type="modified residue" description="Methionine sulfoxide" evidence="1">
    <location>
        <position position="195"/>
    </location>
</feature>
<feature type="modified residue" description="Methionine sulfoxide" evidence="1">
    <location>
        <position position="241"/>
    </location>
</feature>
<protein>
    <recommendedName>
        <fullName>Apolipoprotein A-I</fullName>
        <shortName>Apo-AI</shortName>
        <shortName>ApoA-I</shortName>
    </recommendedName>
    <alternativeName>
        <fullName>Apolipoprotein A1</fullName>
    </alternativeName>
    <component>
        <recommendedName>
            <fullName>Proapolipoprotein A-I</fullName>
            <shortName>ProapoA-I</shortName>
        </recommendedName>
    </component>
    <component>
        <recommendedName>
            <fullName>Truncated apolipoprotein A-I</fullName>
        </recommendedName>
    </component>
</protein>
<sequence>METKAVVLTLAVLFLTGSQARHFWQQDEPQTSWSRVKDLVTVYLDALKDSSRDYVSQFEASALGKQLNLKILDNWDTLSSTFTKLQEQMRPIFQKLWEDLDKETSPLREVLNKDLEELKQKVQPYLDQFQKKWQEEVELFRQKMAPLGTELREGSRQKLQELQEKLGPLGEELRDSLRSHVDALRTQLAPYTEEMRQRLASRLEALKESNLAEYHTKASEHLSALRENAKPALEDFRQGLMPVLEGFQKSVLAALDEATKKLNSQ</sequence>
<accession>P0DMC0</accession>
<reference key="1">
    <citation type="submission" date="2012-05" db="EMBL/GenBank/DDBJ databases">
        <title>The draft genome of Orycteropus afer.</title>
        <authorList>
            <consortium name="The Broad Institute Genome Sequencing Platform"/>
            <person name="Di Palma F."/>
            <person name="Alfoldi J."/>
            <person name="Johnson J."/>
            <person name="Berlin A."/>
            <person name="Gnerre S."/>
            <person name="Jaffe D."/>
            <person name="MacCallum I."/>
            <person name="Young S."/>
            <person name="Walker B.J."/>
            <person name="Lindblad-Toh K."/>
        </authorList>
    </citation>
    <scope>NUCLEOTIDE SEQUENCE [LARGE SCALE GENOMIC DNA]</scope>
</reference>
<reference key="2">
    <citation type="unpublished observations" date="2013-12">
        <authorList>
            <person name="Puppione D.L."/>
        </authorList>
    </citation>
    <scope>IDENTIFICATION</scope>
</reference>
<dbReference type="EMBL" id="ALYB01062454">
    <property type="status" value="NOT_ANNOTATED_CDS"/>
    <property type="molecule type" value="Genomic_DNA"/>
</dbReference>
<dbReference type="SMR" id="P0DMC0"/>
<dbReference type="GO" id="GO:0042627">
    <property type="term" value="C:chylomicron"/>
    <property type="evidence" value="ECO:0007669"/>
    <property type="project" value="TreeGrafter"/>
</dbReference>
<dbReference type="GO" id="GO:1903561">
    <property type="term" value="C:extracellular vesicle"/>
    <property type="evidence" value="ECO:0007669"/>
    <property type="project" value="TreeGrafter"/>
</dbReference>
<dbReference type="GO" id="GO:0034364">
    <property type="term" value="C:high-density lipoprotein particle"/>
    <property type="evidence" value="ECO:0007669"/>
    <property type="project" value="UniProtKB-KW"/>
</dbReference>
<dbReference type="GO" id="GO:0034362">
    <property type="term" value="C:low-density lipoprotein particle"/>
    <property type="evidence" value="ECO:0007669"/>
    <property type="project" value="TreeGrafter"/>
</dbReference>
<dbReference type="GO" id="GO:0034361">
    <property type="term" value="C:very-low-density lipoprotein particle"/>
    <property type="evidence" value="ECO:0007669"/>
    <property type="project" value="TreeGrafter"/>
</dbReference>
<dbReference type="GO" id="GO:0120020">
    <property type="term" value="F:cholesterol transfer activity"/>
    <property type="evidence" value="ECO:0007669"/>
    <property type="project" value="TreeGrafter"/>
</dbReference>
<dbReference type="GO" id="GO:0060228">
    <property type="term" value="F:phosphatidylcholine-sterol O-acyltransferase activator activity"/>
    <property type="evidence" value="ECO:0007669"/>
    <property type="project" value="TreeGrafter"/>
</dbReference>
<dbReference type="GO" id="GO:0005543">
    <property type="term" value="F:phospholipid binding"/>
    <property type="evidence" value="ECO:0007669"/>
    <property type="project" value="TreeGrafter"/>
</dbReference>
<dbReference type="GO" id="GO:0042803">
    <property type="term" value="F:protein homodimerization activity"/>
    <property type="evidence" value="ECO:0000250"/>
    <property type="project" value="UniProtKB"/>
</dbReference>
<dbReference type="GO" id="GO:0055090">
    <property type="term" value="P:acylglycerol homeostasis"/>
    <property type="evidence" value="ECO:0007669"/>
    <property type="project" value="TreeGrafter"/>
</dbReference>
<dbReference type="GO" id="GO:0033344">
    <property type="term" value="P:cholesterol efflux"/>
    <property type="evidence" value="ECO:0007669"/>
    <property type="project" value="TreeGrafter"/>
</dbReference>
<dbReference type="GO" id="GO:0008203">
    <property type="term" value="P:cholesterol metabolic process"/>
    <property type="evidence" value="ECO:0007669"/>
    <property type="project" value="UniProtKB-KW"/>
</dbReference>
<dbReference type="GO" id="GO:0042157">
    <property type="term" value="P:lipoprotein metabolic process"/>
    <property type="evidence" value="ECO:0007669"/>
    <property type="project" value="InterPro"/>
</dbReference>
<dbReference type="GO" id="GO:0033700">
    <property type="term" value="P:phospholipid efflux"/>
    <property type="evidence" value="ECO:0007669"/>
    <property type="project" value="TreeGrafter"/>
</dbReference>
<dbReference type="GO" id="GO:0010875">
    <property type="term" value="P:positive regulation of cholesterol efflux"/>
    <property type="evidence" value="ECO:0000250"/>
    <property type="project" value="UniProtKB"/>
</dbReference>
<dbReference type="GO" id="GO:0050766">
    <property type="term" value="P:positive regulation of phagocytosis"/>
    <property type="evidence" value="ECO:0000250"/>
    <property type="project" value="UniProtKB"/>
</dbReference>
<dbReference type="GO" id="GO:1902995">
    <property type="term" value="P:positive regulation of phospholipid efflux"/>
    <property type="evidence" value="ECO:0000250"/>
    <property type="project" value="UniProtKB"/>
</dbReference>
<dbReference type="GO" id="GO:0050821">
    <property type="term" value="P:protein stabilization"/>
    <property type="evidence" value="ECO:0000250"/>
    <property type="project" value="UniProtKB"/>
</dbReference>
<dbReference type="FunFam" id="1.20.120.20:FF:000001">
    <property type="entry name" value="Apolipoprotein A-I"/>
    <property type="match status" value="1"/>
</dbReference>
<dbReference type="FunFam" id="1.20.5.20:FF:000001">
    <property type="entry name" value="apolipoprotein A-I"/>
    <property type="match status" value="1"/>
</dbReference>
<dbReference type="Gene3D" id="1.20.5.20">
    <property type="match status" value="1"/>
</dbReference>
<dbReference type="Gene3D" id="6.10.140.380">
    <property type="match status" value="1"/>
</dbReference>
<dbReference type="Gene3D" id="1.20.120.20">
    <property type="entry name" value="Apolipoprotein"/>
    <property type="match status" value="1"/>
</dbReference>
<dbReference type="InterPro" id="IPR000074">
    <property type="entry name" value="ApoA_E"/>
</dbReference>
<dbReference type="InterPro" id="IPR050163">
    <property type="entry name" value="Apolipoprotein_A1/A4/E"/>
</dbReference>
<dbReference type="PANTHER" id="PTHR18976">
    <property type="entry name" value="APOLIPOPROTEIN"/>
    <property type="match status" value="1"/>
</dbReference>
<dbReference type="PANTHER" id="PTHR18976:SF11">
    <property type="entry name" value="APOLIPOPROTEIN A-I"/>
    <property type="match status" value="1"/>
</dbReference>
<dbReference type="Pfam" id="PF01442">
    <property type="entry name" value="Apolipoprotein"/>
    <property type="match status" value="1"/>
</dbReference>
<dbReference type="SUPFAM" id="SSF58113">
    <property type="entry name" value="Apolipoprotein A-I"/>
    <property type="match status" value="1"/>
</dbReference>